<feature type="chain" id="PRO_0000205263" description="Isopentenyl-diphosphate Delta-isomerase">
    <location>
        <begin position="1"/>
        <end position="181"/>
    </location>
</feature>
<feature type="domain" description="Nudix hydrolase">
    <location>
        <begin position="30"/>
        <end position="164"/>
    </location>
</feature>
<feature type="active site" evidence="1">
    <location>
        <position position="67"/>
    </location>
</feature>
<feature type="active site" evidence="1">
    <location>
        <position position="116"/>
    </location>
</feature>
<feature type="binding site" evidence="1">
    <location>
        <position position="25"/>
    </location>
    <ligand>
        <name>Mn(2+)</name>
        <dbReference type="ChEBI" id="CHEBI:29035"/>
    </ligand>
</feature>
<feature type="binding site" evidence="1">
    <location>
        <position position="32"/>
    </location>
    <ligand>
        <name>Mn(2+)</name>
        <dbReference type="ChEBI" id="CHEBI:29035"/>
    </ligand>
</feature>
<feature type="binding site" evidence="1">
    <location>
        <position position="67"/>
    </location>
    <ligand>
        <name>Mg(2+)</name>
        <dbReference type="ChEBI" id="CHEBI:18420"/>
    </ligand>
</feature>
<feature type="binding site" evidence="1">
    <location>
        <position position="69"/>
    </location>
    <ligand>
        <name>Mn(2+)</name>
        <dbReference type="ChEBI" id="CHEBI:29035"/>
    </ligand>
</feature>
<feature type="binding site" evidence="1">
    <location>
        <position position="87"/>
    </location>
    <ligand>
        <name>Mg(2+)</name>
        <dbReference type="ChEBI" id="CHEBI:18420"/>
    </ligand>
</feature>
<feature type="binding site" evidence="1">
    <location>
        <position position="114"/>
    </location>
    <ligand>
        <name>Mn(2+)</name>
        <dbReference type="ChEBI" id="CHEBI:29035"/>
    </ligand>
</feature>
<feature type="binding site" evidence="1">
    <location>
        <position position="116"/>
    </location>
    <ligand>
        <name>Mn(2+)</name>
        <dbReference type="ChEBI" id="CHEBI:29035"/>
    </ligand>
</feature>
<evidence type="ECO:0000255" key="1">
    <source>
        <dbReference type="HAMAP-Rule" id="MF_00202"/>
    </source>
</evidence>
<protein>
    <recommendedName>
        <fullName evidence="1">Isopentenyl-diphosphate Delta-isomerase</fullName>
        <shortName evidence="1">IPP isomerase</shortName>
        <ecNumber evidence="1">5.3.3.2</ecNumber>
    </recommendedName>
    <alternativeName>
        <fullName evidence="1">IPP:DMAPP isomerase</fullName>
    </alternativeName>
    <alternativeName>
        <fullName evidence="1">Isopentenyl pyrophosphate isomerase</fullName>
    </alternativeName>
</protein>
<organism>
    <name type="scientific">Salmonella paratyphi A (strain ATCC 9150 / SARB42)</name>
    <dbReference type="NCBI Taxonomy" id="295319"/>
    <lineage>
        <taxon>Bacteria</taxon>
        <taxon>Pseudomonadati</taxon>
        <taxon>Pseudomonadota</taxon>
        <taxon>Gammaproteobacteria</taxon>
        <taxon>Enterobacterales</taxon>
        <taxon>Enterobacteriaceae</taxon>
        <taxon>Salmonella</taxon>
    </lineage>
</organism>
<gene>
    <name evidence="1" type="primary">idi</name>
    <name type="ordered locus">SPA2907</name>
</gene>
<sequence length="181" mass="20781">MTEEHVVLLDEQDKPSGTLEKYAAHTLNTPLHLAFSCWLFNEDGQLLVTRRSLSKKAWPGVWTNSVCGHPQQGETTEEAIIRRCRFELGVEITDLTPVYPHFSYRATDPNGIVENEVCPVFAARATSVLQVNSEEVMDYQWSEFKSVWKSLLATPWAFSPWMVMQASDEQARERLLNYCQR</sequence>
<reference key="1">
    <citation type="journal article" date="2004" name="Nat. Genet.">
        <title>Comparison of genome degradation in Paratyphi A and Typhi, human-restricted serovars of Salmonella enterica that cause typhoid.</title>
        <authorList>
            <person name="McClelland M."/>
            <person name="Sanderson K.E."/>
            <person name="Clifton S.W."/>
            <person name="Latreille P."/>
            <person name="Porwollik S."/>
            <person name="Sabo A."/>
            <person name="Meyer R."/>
            <person name="Bieri T."/>
            <person name="Ozersky P."/>
            <person name="McLellan M."/>
            <person name="Harkins C.R."/>
            <person name="Wang C."/>
            <person name="Nguyen C."/>
            <person name="Berghoff A."/>
            <person name="Elliott G."/>
            <person name="Kohlberg S."/>
            <person name="Strong C."/>
            <person name="Du F."/>
            <person name="Carter J."/>
            <person name="Kremizki C."/>
            <person name="Layman D."/>
            <person name="Leonard S."/>
            <person name="Sun H."/>
            <person name="Fulton L."/>
            <person name="Nash W."/>
            <person name="Miner T."/>
            <person name="Minx P."/>
            <person name="Delehaunty K."/>
            <person name="Fronick C."/>
            <person name="Magrini V."/>
            <person name="Nhan M."/>
            <person name="Warren W."/>
            <person name="Florea L."/>
            <person name="Spieth J."/>
            <person name="Wilson R.K."/>
        </authorList>
    </citation>
    <scope>NUCLEOTIDE SEQUENCE [LARGE SCALE GENOMIC DNA]</scope>
    <source>
        <strain>ATCC 9150 / SARB42</strain>
    </source>
</reference>
<keyword id="KW-0963">Cytoplasm</keyword>
<keyword id="KW-0413">Isomerase</keyword>
<keyword id="KW-0414">Isoprene biosynthesis</keyword>
<keyword id="KW-0460">Magnesium</keyword>
<keyword id="KW-0464">Manganese</keyword>
<keyword id="KW-0479">Metal-binding</keyword>
<accession>Q5PL31</accession>
<comment type="function">
    <text evidence="1">Catalyzes the 1,3-allylic rearrangement of the homoallylic substrate isopentenyl (IPP) to its highly electrophilic allylic isomer, dimethylallyl diphosphate (DMAPP).</text>
</comment>
<comment type="catalytic activity">
    <reaction evidence="1">
        <text>isopentenyl diphosphate = dimethylallyl diphosphate</text>
        <dbReference type="Rhea" id="RHEA:23284"/>
        <dbReference type="ChEBI" id="CHEBI:57623"/>
        <dbReference type="ChEBI" id="CHEBI:128769"/>
        <dbReference type="EC" id="5.3.3.2"/>
    </reaction>
</comment>
<comment type="cofactor">
    <cofactor evidence="1">
        <name>Mg(2+)</name>
        <dbReference type="ChEBI" id="CHEBI:18420"/>
    </cofactor>
    <text evidence="1">Binds 1 Mg(2+) ion per subunit. The magnesium ion binds only when substrate is bound.</text>
</comment>
<comment type="cofactor">
    <cofactor evidence="1">
        <name>Mn(2+)</name>
        <dbReference type="ChEBI" id="CHEBI:29035"/>
    </cofactor>
    <text evidence="1">Binds 1 Mn(2+) ion per subunit.</text>
</comment>
<comment type="pathway">
    <text evidence="1">Isoprenoid biosynthesis; dimethylallyl diphosphate biosynthesis; dimethylallyl diphosphate from isopentenyl diphosphate: step 1/1.</text>
</comment>
<comment type="subunit">
    <text evidence="1">Homodimer.</text>
</comment>
<comment type="subcellular location">
    <subcellularLocation>
        <location evidence="1">Cytoplasm</location>
    </subcellularLocation>
</comment>
<comment type="similarity">
    <text evidence="1">Belongs to the IPP isomerase type 1 family.</text>
</comment>
<dbReference type="EC" id="5.3.3.2" evidence="1"/>
<dbReference type="EMBL" id="CP000026">
    <property type="protein sequence ID" value="AAV78748.1"/>
    <property type="molecule type" value="Genomic_DNA"/>
</dbReference>
<dbReference type="RefSeq" id="WP_000133994.1">
    <property type="nucleotide sequence ID" value="NC_006511.1"/>
</dbReference>
<dbReference type="SMR" id="Q5PL31"/>
<dbReference type="KEGG" id="spt:SPA2907"/>
<dbReference type="HOGENOM" id="CLU_060552_2_0_6"/>
<dbReference type="UniPathway" id="UPA00059">
    <property type="reaction ID" value="UER00104"/>
</dbReference>
<dbReference type="Proteomes" id="UP000008185">
    <property type="component" value="Chromosome"/>
</dbReference>
<dbReference type="GO" id="GO:0005737">
    <property type="term" value="C:cytoplasm"/>
    <property type="evidence" value="ECO:0007669"/>
    <property type="project" value="UniProtKB-SubCell"/>
</dbReference>
<dbReference type="GO" id="GO:0004452">
    <property type="term" value="F:isopentenyl-diphosphate delta-isomerase activity"/>
    <property type="evidence" value="ECO:0007669"/>
    <property type="project" value="UniProtKB-UniRule"/>
</dbReference>
<dbReference type="GO" id="GO:0046872">
    <property type="term" value="F:metal ion binding"/>
    <property type="evidence" value="ECO:0007669"/>
    <property type="project" value="UniProtKB-KW"/>
</dbReference>
<dbReference type="GO" id="GO:0050992">
    <property type="term" value="P:dimethylallyl diphosphate biosynthetic process"/>
    <property type="evidence" value="ECO:0007669"/>
    <property type="project" value="UniProtKB-UniRule"/>
</dbReference>
<dbReference type="GO" id="GO:0008299">
    <property type="term" value="P:isoprenoid biosynthetic process"/>
    <property type="evidence" value="ECO:0007669"/>
    <property type="project" value="UniProtKB-KW"/>
</dbReference>
<dbReference type="CDD" id="cd02885">
    <property type="entry name" value="NUDIX_IPP_Isomerase"/>
    <property type="match status" value="1"/>
</dbReference>
<dbReference type="FunFam" id="3.90.79.10:FF:000009">
    <property type="entry name" value="Isopentenyl-diphosphate Delta-isomerase"/>
    <property type="match status" value="1"/>
</dbReference>
<dbReference type="Gene3D" id="3.90.79.10">
    <property type="entry name" value="Nucleoside Triphosphate Pyrophosphohydrolase"/>
    <property type="match status" value="1"/>
</dbReference>
<dbReference type="HAMAP" id="MF_00202">
    <property type="entry name" value="Idi"/>
    <property type="match status" value="1"/>
</dbReference>
<dbReference type="InterPro" id="IPR056375">
    <property type="entry name" value="Idi_bact"/>
</dbReference>
<dbReference type="InterPro" id="IPR011876">
    <property type="entry name" value="IsopentenylPP_isomerase_typ1"/>
</dbReference>
<dbReference type="InterPro" id="IPR015797">
    <property type="entry name" value="NUDIX_hydrolase-like_dom_sf"/>
</dbReference>
<dbReference type="InterPro" id="IPR000086">
    <property type="entry name" value="NUDIX_hydrolase_dom"/>
</dbReference>
<dbReference type="NCBIfam" id="TIGR02150">
    <property type="entry name" value="IPP_isom_1"/>
    <property type="match status" value="1"/>
</dbReference>
<dbReference type="NCBIfam" id="NF002995">
    <property type="entry name" value="PRK03759.1"/>
    <property type="match status" value="1"/>
</dbReference>
<dbReference type="PANTHER" id="PTHR10885">
    <property type="entry name" value="ISOPENTENYL-DIPHOSPHATE DELTA-ISOMERASE"/>
    <property type="match status" value="1"/>
</dbReference>
<dbReference type="PANTHER" id="PTHR10885:SF0">
    <property type="entry name" value="ISOPENTENYL-DIPHOSPHATE DELTA-ISOMERASE"/>
    <property type="match status" value="1"/>
</dbReference>
<dbReference type="Pfam" id="PF00293">
    <property type="entry name" value="NUDIX"/>
    <property type="match status" value="1"/>
</dbReference>
<dbReference type="PIRSF" id="PIRSF018427">
    <property type="entry name" value="Isopntndiph_ism"/>
    <property type="match status" value="1"/>
</dbReference>
<dbReference type="SUPFAM" id="SSF55811">
    <property type="entry name" value="Nudix"/>
    <property type="match status" value="1"/>
</dbReference>
<dbReference type="PROSITE" id="PS51462">
    <property type="entry name" value="NUDIX"/>
    <property type="match status" value="1"/>
</dbReference>
<name>IDI_SALPA</name>
<proteinExistence type="inferred from homology"/>